<sequence>MSLVYMNIMIAFSISLLGLLMYRSHLMSSLLCLEGMMLALFILSTIMILNIHFTLASMIPIILLVFAACEAAVGLSLLVMVSNTYGVDYVQNLNLLQC</sequence>
<proteinExistence type="inferred from homology"/>
<evidence type="ECO:0000250" key="1">
    <source>
        <dbReference type="UniProtKB" id="P03901"/>
    </source>
</evidence>
<evidence type="ECO:0000250" key="2">
    <source>
        <dbReference type="UniProtKB" id="P03902"/>
    </source>
</evidence>
<evidence type="ECO:0000255" key="3"/>
<evidence type="ECO:0000305" key="4"/>
<feature type="chain" id="PRO_0000275127" description="NADH-ubiquinone oxidoreductase chain 4L">
    <location>
        <begin position="1"/>
        <end position="98"/>
    </location>
</feature>
<feature type="transmembrane region" description="Helical" evidence="3">
    <location>
        <begin position="1"/>
        <end position="21"/>
    </location>
</feature>
<feature type="transmembrane region" description="Helical" evidence="3">
    <location>
        <begin position="25"/>
        <end position="45"/>
    </location>
</feature>
<feature type="transmembrane region" description="Helical" evidence="3">
    <location>
        <begin position="67"/>
        <end position="87"/>
    </location>
</feature>
<reference key="1">
    <citation type="journal article" date="2000" name="Mol. Biol. Evol.">
        <title>The phylogenetic position of the Talpidae within Eutheria based on analysis of complete mitochondrial sequences.</title>
        <authorList>
            <person name="Mouchaty S.K."/>
            <person name="Gullberg A."/>
            <person name="Janke A."/>
            <person name="Arnason U."/>
        </authorList>
    </citation>
    <scope>NUCLEOTIDE SEQUENCE [GENOMIC DNA]</scope>
</reference>
<comment type="function">
    <text evidence="1">Core subunit of the mitochondrial membrane respiratory chain NADH dehydrogenase (Complex I) which catalyzes electron transfer from NADH through the respiratory chain, using ubiquinone as an electron acceptor. Part of the enzyme membrane arm which is embedded in the lipid bilayer and involved in proton translocation.</text>
</comment>
<comment type="catalytic activity">
    <reaction evidence="1">
        <text>a ubiquinone + NADH + 5 H(+)(in) = a ubiquinol + NAD(+) + 4 H(+)(out)</text>
        <dbReference type="Rhea" id="RHEA:29091"/>
        <dbReference type="Rhea" id="RHEA-COMP:9565"/>
        <dbReference type="Rhea" id="RHEA-COMP:9566"/>
        <dbReference type="ChEBI" id="CHEBI:15378"/>
        <dbReference type="ChEBI" id="CHEBI:16389"/>
        <dbReference type="ChEBI" id="CHEBI:17976"/>
        <dbReference type="ChEBI" id="CHEBI:57540"/>
        <dbReference type="ChEBI" id="CHEBI:57945"/>
        <dbReference type="EC" id="7.1.1.2"/>
    </reaction>
    <physiologicalReaction direction="left-to-right" evidence="1">
        <dbReference type="Rhea" id="RHEA:29092"/>
    </physiologicalReaction>
</comment>
<comment type="subunit">
    <text evidence="2">Core subunit of respiratory chain NADH dehydrogenase (Complex I) which is composed of 45 different subunits.</text>
</comment>
<comment type="subcellular location">
    <subcellularLocation>
        <location evidence="2">Mitochondrion inner membrane</location>
        <topology evidence="3">Multi-pass membrane protein</topology>
    </subcellularLocation>
</comment>
<comment type="similarity">
    <text evidence="4">Belongs to the complex I subunit 4L family.</text>
</comment>
<name>NU4LM_TALEU</name>
<protein>
    <recommendedName>
        <fullName>NADH-ubiquinone oxidoreductase chain 4L</fullName>
        <ecNumber>7.1.1.2</ecNumber>
    </recommendedName>
    <alternativeName>
        <fullName>NADH dehydrogenase subunit 4L</fullName>
    </alternativeName>
</protein>
<accession>Q9MJA8</accession>
<dbReference type="EC" id="7.1.1.2"/>
<dbReference type="EMBL" id="Y19192">
    <property type="protein sequence ID" value="CAB71167.1"/>
    <property type="molecule type" value="Genomic_DNA"/>
</dbReference>
<dbReference type="RefSeq" id="NP_037657.1">
    <property type="nucleotide sequence ID" value="NC_002391.1"/>
</dbReference>
<dbReference type="SMR" id="Q9MJA8"/>
<dbReference type="GeneID" id="808928"/>
<dbReference type="CTD" id="4539"/>
<dbReference type="GO" id="GO:0005743">
    <property type="term" value="C:mitochondrial inner membrane"/>
    <property type="evidence" value="ECO:0000250"/>
    <property type="project" value="UniProtKB"/>
</dbReference>
<dbReference type="GO" id="GO:0045271">
    <property type="term" value="C:respiratory chain complex I"/>
    <property type="evidence" value="ECO:0000250"/>
    <property type="project" value="UniProtKB"/>
</dbReference>
<dbReference type="GO" id="GO:0008137">
    <property type="term" value="F:NADH dehydrogenase (ubiquinone) activity"/>
    <property type="evidence" value="ECO:0000250"/>
    <property type="project" value="UniProtKB"/>
</dbReference>
<dbReference type="GO" id="GO:0042773">
    <property type="term" value="P:ATP synthesis coupled electron transport"/>
    <property type="evidence" value="ECO:0007669"/>
    <property type="project" value="InterPro"/>
</dbReference>
<dbReference type="FunFam" id="1.10.287.3510:FF:000002">
    <property type="entry name" value="NADH-ubiquinone oxidoreductase chain 4L"/>
    <property type="match status" value="1"/>
</dbReference>
<dbReference type="Gene3D" id="1.10.287.3510">
    <property type="match status" value="1"/>
</dbReference>
<dbReference type="InterPro" id="IPR001133">
    <property type="entry name" value="NADH_UbQ_OxRdtase_chain4L/K"/>
</dbReference>
<dbReference type="InterPro" id="IPR039428">
    <property type="entry name" value="NUOK/Mnh_C1-like"/>
</dbReference>
<dbReference type="PANTHER" id="PTHR11434:SF0">
    <property type="entry name" value="NADH-UBIQUINONE OXIDOREDUCTASE CHAIN 4L"/>
    <property type="match status" value="1"/>
</dbReference>
<dbReference type="PANTHER" id="PTHR11434">
    <property type="entry name" value="NADH-UBIQUINONE OXIDOREDUCTASE SUBUNIT ND4L"/>
    <property type="match status" value="1"/>
</dbReference>
<dbReference type="Pfam" id="PF00420">
    <property type="entry name" value="Oxidored_q2"/>
    <property type="match status" value="1"/>
</dbReference>
<geneLocation type="mitochondrion"/>
<gene>
    <name type="primary">MT-ND4L</name>
    <name type="synonym">MTND4L</name>
    <name type="synonym">NADH4L</name>
    <name type="synonym">ND4L</name>
</gene>
<organism>
    <name type="scientific">Talpa europaea</name>
    <name type="common">European mole</name>
    <dbReference type="NCBI Taxonomy" id="9375"/>
    <lineage>
        <taxon>Eukaryota</taxon>
        <taxon>Metazoa</taxon>
        <taxon>Chordata</taxon>
        <taxon>Craniata</taxon>
        <taxon>Vertebrata</taxon>
        <taxon>Euteleostomi</taxon>
        <taxon>Mammalia</taxon>
        <taxon>Eutheria</taxon>
        <taxon>Laurasiatheria</taxon>
        <taxon>Eulipotyphla</taxon>
        <taxon>Talpidae</taxon>
        <taxon>Talpa</taxon>
    </lineage>
</organism>
<keyword id="KW-0249">Electron transport</keyword>
<keyword id="KW-0472">Membrane</keyword>
<keyword id="KW-0496">Mitochondrion</keyword>
<keyword id="KW-0999">Mitochondrion inner membrane</keyword>
<keyword id="KW-0520">NAD</keyword>
<keyword id="KW-0679">Respiratory chain</keyword>
<keyword id="KW-1278">Translocase</keyword>
<keyword id="KW-0812">Transmembrane</keyword>
<keyword id="KW-1133">Transmembrane helix</keyword>
<keyword id="KW-0813">Transport</keyword>
<keyword id="KW-0830">Ubiquinone</keyword>